<feature type="chain" id="PRO_0000167979" description="Small ribosomal subunit protein bS20">
    <location>
        <begin position="1"/>
        <end position="88"/>
    </location>
</feature>
<organism>
    <name type="scientific">Legionella pneumophila subsp. pneumophila (strain Philadelphia 1 / ATCC 33152 / DSM 7513)</name>
    <dbReference type="NCBI Taxonomy" id="272624"/>
    <lineage>
        <taxon>Bacteria</taxon>
        <taxon>Pseudomonadati</taxon>
        <taxon>Pseudomonadota</taxon>
        <taxon>Gammaproteobacteria</taxon>
        <taxon>Legionellales</taxon>
        <taxon>Legionellaceae</taxon>
        <taxon>Legionella</taxon>
    </lineage>
</organism>
<accession>Q5ZS83</accession>
<proteinExistence type="inferred from homology"/>
<protein>
    <recommendedName>
        <fullName evidence="1">Small ribosomal subunit protein bS20</fullName>
    </recommendedName>
    <alternativeName>
        <fullName evidence="2">30S ribosomal protein S20</fullName>
    </alternativeName>
</protein>
<reference key="1">
    <citation type="journal article" date="2004" name="Science">
        <title>The genomic sequence of the accidental pathogen Legionella pneumophila.</title>
        <authorList>
            <person name="Chien M."/>
            <person name="Morozova I."/>
            <person name="Shi S."/>
            <person name="Sheng H."/>
            <person name="Chen J."/>
            <person name="Gomez S.M."/>
            <person name="Asamani G."/>
            <person name="Hill K."/>
            <person name="Nuara J."/>
            <person name="Feder M."/>
            <person name="Rineer J."/>
            <person name="Greenberg J.J."/>
            <person name="Steshenko V."/>
            <person name="Park S.H."/>
            <person name="Zhao B."/>
            <person name="Teplitskaya E."/>
            <person name="Edwards J.R."/>
            <person name="Pampou S."/>
            <person name="Georghiou A."/>
            <person name="Chou I.-C."/>
            <person name="Iannuccilli W."/>
            <person name="Ulz M.E."/>
            <person name="Kim D.H."/>
            <person name="Geringer-Sameth A."/>
            <person name="Goldsberry C."/>
            <person name="Morozov P."/>
            <person name="Fischer S.G."/>
            <person name="Segal G."/>
            <person name="Qu X."/>
            <person name="Rzhetsky A."/>
            <person name="Zhang P."/>
            <person name="Cayanis E."/>
            <person name="De Jong P.J."/>
            <person name="Ju J."/>
            <person name="Kalachikov S."/>
            <person name="Shuman H.A."/>
            <person name="Russo J.J."/>
        </authorList>
    </citation>
    <scope>NUCLEOTIDE SEQUENCE [LARGE SCALE GENOMIC DNA]</scope>
    <source>
        <strain>Philadelphia 1 / ATCC 33152 / DSM 7513</strain>
    </source>
</reference>
<evidence type="ECO:0000255" key="1">
    <source>
        <dbReference type="HAMAP-Rule" id="MF_00500"/>
    </source>
</evidence>
<evidence type="ECO:0000305" key="2"/>
<sequence length="88" mass="9714">MANIKSAIKRARQNVKLRQHNASARSMYRTYIKNVLKAVESGDQEAARAAYTKAQPVIDKAANKGLIHKNKAARIKGRLVARLKAMAA</sequence>
<name>RS20_LEGPH</name>
<keyword id="KW-1185">Reference proteome</keyword>
<keyword id="KW-0687">Ribonucleoprotein</keyword>
<keyword id="KW-0689">Ribosomal protein</keyword>
<keyword id="KW-0694">RNA-binding</keyword>
<keyword id="KW-0699">rRNA-binding</keyword>
<comment type="function">
    <text evidence="1">Binds directly to 16S ribosomal RNA.</text>
</comment>
<comment type="similarity">
    <text evidence="1">Belongs to the bacterial ribosomal protein bS20 family.</text>
</comment>
<gene>
    <name evidence="1" type="primary">rpsT</name>
    <name type="ordered locus">lpg2636</name>
</gene>
<dbReference type="EMBL" id="AE017354">
    <property type="protein sequence ID" value="AAU28694.1"/>
    <property type="molecule type" value="Genomic_DNA"/>
</dbReference>
<dbReference type="RefSeq" id="WP_010948336.1">
    <property type="nucleotide sequence ID" value="NC_002942.5"/>
</dbReference>
<dbReference type="RefSeq" id="YP_096641.1">
    <property type="nucleotide sequence ID" value="NC_002942.5"/>
</dbReference>
<dbReference type="SMR" id="Q5ZS83"/>
<dbReference type="STRING" id="272624.lpg2636"/>
<dbReference type="PaxDb" id="272624-lpg2636"/>
<dbReference type="GeneID" id="57036635"/>
<dbReference type="KEGG" id="lpn:lpg2636"/>
<dbReference type="PATRIC" id="fig|272624.6.peg.2813"/>
<dbReference type="eggNOG" id="COG0268">
    <property type="taxonomic scope" value="Bacteria"/>
</dbReference>
<dbReference type="HOGENOM" id="CLU_160655_4_0_6"/>
<dbReference type="OrthoDB" id="9807974at2"/>
<dbReference type="Proteomes" id="UP000000609">
    <property type="component" value="Chromosome"/>
</dbReference>
<dbReference type="GO" id="GO:0005829">
    <property type="term" value="C:cytosol"/>
    <property type="evidence" value="ECO:0007669"/>
    <property type="project" value="TreeGrafter"/>
</dbReference>
<dbReference type="GO" id="GO:0015935">
    <property type="term" value="C:small ribosomal subunit"/>
    <property type="evidence" value="ECO:0007669"/>
    <property type="project" value="TreeGrafter"/>
</dbReference>
<dbReference type="GO" id="GO:0070181">
    <property type="term" value="F:small ribosomal subunit rRNA binding"/>
    <property type="evidence" value="ECO:0007669"/>
    <property type="project" value="TreeGrafter"/>
</dbReference>
<dbReference type="GO" id="GO:0003735">
    <property type="term" value="F:structural constituent of ribosome"/>
    <property type="evidence" value="ECO:0007669"/>
    <property type="project" value="InterPro"/>
</dbReference>
<dbReference type="GO" id="GO:0006412">
    <property type="term" value="P:translation"/>
    <property type="evidence" value="ECO:0007669"/>
    <property type="project" value="UniProtKB-UniRule"/>
</dbReference>
<dbReference type="FunFam" id="1.20.58.110:FF:000001">
    <property type="entry name" value="30S ribosomal protein S20"/>
    <property type="match status" value="1"/>
</dbReference>
<dbReference type="Gene3D" id="1.20.58.110">
    <property type="entry name" value="Ribosomal protein S20"/>
    <property type="match status" value="1"/>
</dbReference>
<dbReference type="HAMAP" id="MF_00500">
    <property type="entry name" value="Ribosomal_bS20"/>
    <property type="match status" value="1"/>
</dbReference>
<dbReference type="InterPro" id="IPR002583">
    <property type="entry name" value="Ribosomal_bS20"/>
</dbReference>
<dbReference type="InterPro" id="IPR036510">
    <property type="entry name" value="Ribosomal_bS20_sf"/>
</dbReference>
<dbReference type="NCBIfam" id="TIGR00029">
    <property type="entry name" value="S20"/>
    <property type="match status" value="1"/>
</dbReference>
<dbReference type="PANTHER" id="PTHR33398">
    <property type="entry name" value="30S RIBOSOMAL PROTEIN S20"/>
    <property type="match status" value="1"/>
</dbReference>
<dbReference type="PANTHER" id="PTHR33398:SF1">
    <property type="entry name" value="SMALL RIBOSOMAL SUBUNIT PROTEIN BS20C"/>
    <property type="match status" value="1"/>
</dbReference>
<dbReference type="Pfam" id="PF01649">
    <property type="entry name" value="Ribosomal_S20p"/>
    <property type="match status" value="1"/>
</dbReference>
<dbReference type="SUPFAM" id="SSF46992">
    <property type="entry name" value="Ribosomal protein S20"/>
    <property type="match status" value="1"/>
</dbReference>